<evidence type="ECO:0000250" key="1"/>
<evidence type="ECO:0000250" key="2">
    <source>
        <dbReference type="UniProtKB" id="P68425"/>
    </source>
</evidence>
<evidence type="ECO:0000255" key="3"/>
<evidence type="ECO:0000255" key="4">
    <source>
        <dbReference type="PROSITE-ProRule" id="PRU00031"/>
    </source>
</evidence>
<evidence type="ECO:0000305" key="5"/>
<feature type="signal peptide" evidence="3">
    <location>
        <begin position="1"/>
        <end position="27"/>
    </location>
</feature>
<feature type="propeptide" id="PRO_0000380160" evidence="1">
    <location>
        <begin position="28"/>
        <end position="33"/>
    </location>
</feature>
<feature type="chain" id="PRO_0000380161" description="Kunitz-type kappaPI-theraphotoxin-Hs1b">
    <location>
        <begin position="34"/>
        <end position="88"/>
    </location>
</feature>
<feature type="domain" description="BPTI/Kunitz inhibitor" evidence="4">
    <location>
        <begin position="37"/>
        <end position="85"/>
    </location>
</feature>
<feature type="site" description="Reactive bond for trypsin" evidence="1">
    <location>
        <begin position="47"/>
        <end position="48"/>
    </location>
</feature>
<feature type="disulfide bond" evidence="4">
    <location>
        <begin position="37"/>
        <end position="85"/>
    </location>
</feature>
<feature type="disulfide bond" evidence="4">
    <location>
        <begin position="46"/>
        <end position="68"/>
    </location>
</feature>
<feature type="disulfide bond" evidence="4">
    <location>
        <begin position="60"/>
        <end position="81"/>
    </location>
</feature>
<name>VKT11_CYRSC</name>
<organism>
    <name type="scientific">Cyriopagopus schmidti</name>
    <name type="common">Chinese bird spider</name>
    <name type="synonym">Haplopelma schmidti</name>
    <dbReference type="NCBI Taxonomy" id="29017"/>
    <lineage>
        <taxon>Eukaryota</taxon>
        <taxon>Metazoa</taxon>
        <taxon>Ecdysozoa</taxon>
        <taxon>Arthropoda</taxon>
        <taxon>Chelicerata</taxon>
        <taxon>Arachnida</taxon>
        <taxon>Araneae</taxon>
        <taxon>Mygalomorphae</taxon>
        <taxon>Theraphosidae</taxon>
        <taxon>Cyriopagopus</taxon>
    </lineage>
</organism>
<keyword id="KW-1015">Disulfide bond</keyword>
<keyword id="KW-0646">Protease inhibitor</keyword>
<keyword id="KW-0964">Secreted</keyword>
<keyword id="KW-0722">Serine protease inhibitor</keyword>
<keyword id="KW-0732">Signal</keyword>
<protein>
    <recommendedName>
        <fullName>Kunitz-type kappaPI-theraphotoxin-Hs1b</fullName>
        <shortName>KappaPI-TRTX-Hs1b</shortName>
    </recommendedName>
    <alternativeName>
        <fullName>Kunitz-type serine protease inhibitor huwentoxin-11g11</fullName>
        <shortName>HW11g11</shortName>
    </alternativeName>
</protein>
<dbReference type="EMBL" id="EU635744">
    <property type="protein sequence ID" value="ACD01236.1"/>
    <property type="molecule type" value="Genomic_DNA"/>
</dbReference>
<dbReference type="SMR" id="B2ZBB6"/>
<dbReference type="MEROPS" id="I02.968"/>
<dbReference type="ArachnoServer" id="AS000458">
    <property type="toxin name" value="kappa-theraphotoxin-Hs1b"/>
</dbReference>
<dbReference type="GO" id="GO:0005615">
    <property type="term" value="C:extracellular space"/>
    <property type="evidence" value="ECO:0007669"/>
    <property type="project" value="TreeGrafter"/>
</dbReference>
<dbReference type="GO" id="GO:0015459">
    <property type="term" value="F:potassium channel regulator activity"/>
    <property type="evidence" value="ECO:0007669"/>
    <property type="project" value="UniProtKB-KW"/>
</dbReference>
<dbReference type="GO" id="GO:0004867">
    <property type="term" value="F:serine-type endopeptidase inhibitor activity"/>
    <property type="evidence" value="ECO:0007669"/>
    <property type="project" value="UniProtKB-KW"/>
</dbReference>
<dbReference type="GO" id="GO:0090729">
    <property type="term" value="F:toxin activity"/>
    <property type="evidence" value="ECO:0007669"/>
    <property type="project" value="UniProtKB-KW"/>
</dbReference>
<dbReference type="GO" id="GO:0044562">
    <property type="term" value="P:envenomation resulting in negative regulation of voltage-gated potassium channel activity in another organism"/>
    <property type="evidence" value="ECO:0007669"/>
    <property type="project" value="UniProtKB-ARBA"/>
</dbReference>
<dbReference type="CDD" id="cd22598">
    <property type="entry name" value="Kunitz_huwentoxin"/>
    <property type="match status" value="1"/>
</dbReference>
<dbReference type="FunFam" id="4.10.410.10:FF:000020">
    <property type="entry name" value="Collagen, type VI, alpha 3"/>
    <property type="match status" value="1"/>
</dbReference>
<dbReference type="Gene3D" id="4.10.410.10">
    <property type="entry name" value="Pancreatic trypsin inhibitor Kunitz domain"/>
    <property type="match status" value="1"/>
</dbReference>
<dbReference type="InterPro" id="IPR002223">
    <property type="entry name" value="Kunitz_BPTI"/>
</dbReference>
<dbReference type="InterPro" id="IPR036880">
    <property type="entry name" value="Kunitz_BPTI_sf"/>
</dbReference>
<dbReference type="InterPro" id="IPR020901">
    <property type="entry name" value="Prtase_inh_Kunz-CS"/>
</dbReference>
<dbReference type="InterPro" id="IPR050098">
    <property type="entry name" value="TFPI/VKTCI-like"/>
</dbReference>
<dbReference type="PANTHER" id="PTHR10083:SF374">
    <property type="entry name" value="BPTI_KUNITZ INHIBITOR DOMAIN-CONTAINING PROTEIN"/>
    <property type="match status" value="1"/>
</dbReference>
<dbReference type="PANTHER" id="PTHR10083">
    <property type="entry name" value="KUNITZ-TYPE PROTEASE INHIBITOR-RELATED"/>
    <property type="match status" value="1"/>
</dbReference>
<dbReference type="Pfam" id="PF00014">
    <property type="entry name" value="Kunitz_BPTI"/>
    <property type="match status" value="1"/>
</dbReference>
<dbReference type="PRINTS" id="PR00759">
    <property type="entry name" value="BASICPTASE"/>
</dbReference>
<dbReference type="SMART" id="SM00131">
    <property type="entry name" value="KU"/>
    <property type="match status" value="1"/>
</dbReference>
<dbReference type="SUPFAM" id="SSF57362">
    <property type="entry name" value="BPTI-like"/>
    <property type="match status" value="1"/>
</dbReference>
<dbReference type="PROSITE" id="PS00280">
    <property type="entry name" value="BPTI_KUNITZ_1"/>
    <property type="match status" value="1"/>
</dbReference>
<dbReference type="PROSITE" id="PS50279">
    <property type="entry name" value="BPTI_KUNITZ_2"/>
    <property type="match status" value="1"/>
</dbReference>
<proteinExistence type="inferred from homology"/>
<comment type="function">
    <text evidence="2">Serine protease inhibitor that inhibits trypsin at a molar ratio of 1:1.</text>
</comment>
<comment type="subcellular location">
    <subcellularLocation>
        <location evidence="5">Secreted</location>
    </subcellularLocation>
</comment>
<comment type="tissue specificity">
    <text evidence="5">Expressed by the venom gland.</text>
</comment>
<comment type="similarity">
    <text evidence="5">Belongs to the venom Kunitz-type family. 02 (native) subfamily.</text>
</comment>
<reference key="1">
    <citation type="journal article" date="2008" name="Peptides">
        <title>Genomic organization and cloning of novel genes encoding toxin-like peptides of three superfamilies from the spider Orinithoctonus huwena.</title>
        <authorList>
            <person name="Jiang L."/>
            <person name="Chen J."/>
            <person name="Peng L."/>
            <person name="Zhang Y."/>
            <person name="Xiong X."/>
            <person name="Liang S."/>
        </authorList>
    </citation>
    <scope>NUCLEOTIDE SEQUENCE [GENOMIC DNA]</scope>
</reference>
<sequence>MGIARILSAVLFLSVLFVVTFPALLSADHHDGRIDTCRLPSDRGRCKASFERWYFNGRTCAKFIYGGCGGNGNKFPTQEACMKRCGKA</sequence>
<accession>B2ZBB6</accession>